<organism>
    <name type="scientific">Salmonella agona (strain SL483)</name>
    <dbReference type="NCBI Taxonomy" id="454166"/>
    <lineage>
        <taxon>Bacteria</taxon>
        <taxon>Pseudomonadati</taxon>
        <taxon>Pseudomonadota</taxon>
        <taxon>Gammaproteobacteria</taxon>
        <taxon>Enterobacterales</taxon>
        <taxon>Enterobacteriaceae</taxon>
        <taxon>Salmonella</taxon>
    </lineage>
</organism>
<protein>
    <recommendedName>
        <fullName evidence="1">Multidrug resistance protein MdtC</fullName>
    </recommendedName>
    <alternativeName>
        <fullName evidence="1">Multidrug transporter MdtC</fullName>
    </alternativeName>
</protein>
<evidence type="ECO:0000255" key="1">
    <source>
        <dbReference type="HAMAP-Rule" id="MF_01424"/>
    </source>
</evidence>
<feature type="chain" id="PRO_1000145677" description="Multidrug resistance protein MdtC">
    <location>
        <begin position="1"/>
        <end position="1026"/>
    </location>
</feature>
<feature type="transmembrane region" description="Helical" evidence="1">
    <location>
        <begin position="15"/>
        <end position="35"/>
    </location>
</feature>
<feature type="transmembrane region" description="Helical" evidence="1">
    <location>
        <begin position="333"/>
        <end position="353"/>
    </location>
</feature>
<feature type="transmembrane region" description="Helical" evidence="1">
    <location>
        <begin position="360"/>
        <end position="380"/>
    </location>
</feature>
<feature type="transmembrane region" description="Helical" evidence="1">
    <location>
        <begin position="387"/>
        <end position="407"/>
    </location>
</feature>
<feature type="transmembrane region" description="Helical" evidence="1">
    <location>
        <begin position="431"/>
        <end position="451"/>
    </location>
</feature>
<feature type="transmembrane region" description="Helical" evidence="1">
    <location>
        <begin position="463"/>
        <end position="483"/>
    </location>
</feature>
<feature type="transmembrane region" description="Helical" evidence="1">
    <location>
        <begin position="528"/>
        <end position="548"/>
    </location>
</feature>
<feature type="transmembrane region" description="Helical" evidence="1">
    <location>
        <begin position="853"/>
        <end position="873"/>
    </location>
</feature>
<feature type="transmembrane region" description="Helical" evidence="1">
    <location>
        <begin position="897"/>
        <end position="917"/>
    </location>
</feature>
<feature type="transmembrane region" description="Helical" evidence="1">
    <location>
        <begin position="953"/>
        <end position="973"/>
    </location>
</feature>
<feature type="transmembrane region" description="Helical" evidence="1">
    <location>
        <begin position="984"/>
        <end position="1004"/>
    </location>
</feature>
<sequence length="1026" mass="110906">MRFFALFIYRPVATILIAAAITLCGILGFRLLPVAPLPQVDFPVIMVSASLPGASPETMASSVATPLERSLGRIAGVNEMTSSSSLGSTRIILEFNFDRDINGAARDVQAAINAAQSLLPGGMPSRPTYRKANPSDAPIMILTLTSESWSQGKLYDFASTQLAQTIAQIDGVGDVDVGGSSLPAVRVGLNPQALFNQGVSLDEVREAIDSANVRRPQGAIEDSVHRWQIQTNDELKTAAEYQPLIIHYNNGAAVRLGDVASVTDSVQDVRNAGMTNAKPAILLMIRKLPEANIIQTVDGIRAKLPELRAMIPAAIDLQIAQDRSPTIRASLQEVEETLAISVALVILVVFLFLRSGRATLIPAVAVPVSLIGTFAAMYLCGFSLNNLSLMALTIATGFVVDDAIVVLENIARHLEAGMKPLQAALQGTREVGFTVISMSLSLVAVFLPLLLMGGLPGRLLREFAVTLSVAIGISLVVSLTLTPMMCGWMLKSSKPRTQPRKRGVGRLLVALQQGYGTSLKWVLNHTRLVGVVFLGTVALNIWLYIAIPKTFFPEQDTGVLMGGIQADQSISFQAMRGKLQDFMKIIRDDPAVNNVTGFTGGSRVNSGMMFITLKPRGERKETAQQVIDRLRVKLAKEPGARLFLMAVQDIRVGGRQANASYQYTLLSDSLAALREWEPKIRKALSALPQLADVNSDQQDNGAEMNLIYDRDTMSRLGIDVQAANSLLNNAFGQRQISTIYQPMNQYKVVMEVDPRYSQDISALEKMFVINSDGKAIPLSYFAQWRPANAPLSVNHQGLSAASTIAFNLPTGTSLSQATEAINRTMTQLGVPPTVRGSFSGTAQVFQQTMNSQLILIVAAIATVYIVLGILYESYVHPLTILSTLPSAGVGALLALELFNAPFSLIALIGIMLLIGIVKKNAIMMVDFALEAQRSGGLTPEQAIFQACLLRFRPIMMTTLAALFGALPLVLSGGDGSELRQPLGITIVGGLVMSQLLTLYTTPVVYLFFDRLRLRFSRKNSKPIVEI</sequence>
<proteinExistence type="inferred from homology"/>
<keyword id="KW-0997">Cell inner membrane</keyword>
<keyword id="KW-1003">Cell membrane</keyword>
<keyword id="KW-0472">Membrane</keyword>
<keyword id="KW-0812">Transmembrane</keyword>
<keyword id="KW-1133">Transmembrane helix</keyword>
<keyword id="KW-0813">Transport</keyword>
<reference key="1">
    <citation type="journal article" date="2011" name="J. Bacteriol.">
        <title>Comparative genomics of 28 Salmonella enterica isolates: evidence for CRISPR-mediated adaptive sublineage evolution.</title>
        <authorList>
            <person name="Fricke W.F."/>
            <person name="Mammel M.K."/>
            <person name="McDermott P.F."/>
            <person name="Tartera C."/>
            <person name="White D.G."/>
            <person name="Leclerc J.E."/>
            <person name="Ravel J."/>
            <person name="Cebula T.A."/>
        </authorList>
    </citation>
    <scope>NUCLEOTIDE SEQUENCE [LARGE SCALE GENOMIC DNA]</scope>
    <source>
        <strain>SL483</strain>
    </source>
</reference>
<accession>B5EXV8</accession>
<name>MDTC_SALA4</name>
<dbReference type="EMBL" id="CP001138">
    <property type="protein sequence ID" value="ACH52889.1"/>
    <property type="molecule type" value="Genomic_DNA"/>
</dbReference>
<dbReference type="RefSeq" id="WP_001210083.1">
    <property type="nucleotide sequence ID" value="NC_011149.1"/>
</dbReference>
<dbReference type="SMR" id="B5EXV8"/>
<dbReference type="KEGG" id="sea:SeAg_B2258"/>
<dbReference type="HOGENOM" id="CLU_002755_1_2_6"/>
<dbReference type="Proteomes" id="UP000008819">
    <property type="component" value="Chromosome"/>
</dbReference>
<dbReference type="GO" id="GO:0005886">
    <property type="term" value="C:plasma membrane"/>
    <property type="evidence" value="ECO:0007669"/>
    <property type="project" value="UniProtKB-SubCell"/>
</dbReference>
<dbReference type="GO" id="GO:0042910">
    <property type="term" value="F:xenobiotic transmembrane transporter activity"/>
    <property type="evidence" value="ECO:0007669"/>
    <property type="project" value="TreeGrafter"/>
</dbReference>
<dbReference type="FunFam" id="1.20.1640.10:FF:000001">
    <property type="entry name" value="Efflux pump membrane transporter"/>
    <property type="match status" value="1"/>
</dbReference>
<dbReference type="FunFam" id="3.30.70.1430:FF:000001">
    <property type="entry name" value="Efflux pump membrane transporter"/>
    <property type="match status" value="1"/>
</dbReference>
<dbReference type="FunFam" id="3.30.2090.10:FF:000004">
    <property type="entry name" value="Multidrug resistance protein MdtC"/>
    <property type="match status" value="1"/>
</dbReference>
<dbReference type="FunFam" id="3.30.2090.10:FF:000005">
    <property type="entry name" value="Multidrug resistance protein MdtC"/>
    <property type="match status" value="1"/>
</dbReference>
<dbReference type="FunFam" id="3.30.70.1430:FF:000004">
    <property type="entry name" value="Multidrug resistance protein MdtC"/>
    <property type="match status" value="1"/>
</dbReference>
<dbReference type="Gene3D" id="3.30.70.1430">
    <property type="entry name" value="Multidrug efflux transporter AcrB pore domain"/>
    <property type="match status" value="2"/>
</dbReference>
<dbReference type="Gene3D" id="3.30.70.1440">
    <property type="entry name" value="Multidrug efflux transporter AcrB pore domain"/>
    <property type="match status" value="1"/>
</dbReference>
<dbReference type="Gene3D" id="3.30.70.1320">
    <property type="entry name" value="Multidrug efflux transporter AcrB pore domain like"/>
    <property type="match status" value="1"/>
</dbReference>
<dbReference type="Gene3D" id="3.30.2090.10">
    <property type="entry name" value="Multidrug efflux transporter AcrB TolC docking domain, DN and DC subdomains"/>
    <property type="match status" value="2"/>
</dbReference>
<dbReference type="Gene3D" id="1.20.1640.10">
    <property type="entry name" value="Multidrug efflux transporter AcrB transmembrane domain"/>
    <property type="match status" value="2"/>
</dbReference>
<dbReference type="HAMAP" id="MF_01424">
    <property type="entry name" value="MdtC"/>
    <property type="match status" value="1"/>
</dbReference>
<dbReference type="InterPro" id="IPR027463">
    <property type="entry name" value="AcrB_DN_DC_subdom"/>
</dbReference>
<dbReference type="InterPro" id="IPR001036">
    <property type="entry name" value="Acrflvin-R"/>
</dbReference>
<dbReference type="InterPro" id="IPR023931">
    <property type="entry name" value="Multidrug-R_MdtC"/>
</dbReference>
<dbReference type="NCBIfam" id="NF007905">
    <property type="entry name" value="PRK10614.1"/>
    <property type="match status" value="1"/>
</dbReference>
<dbReference type="NCBIfam" id="NF033617">
    <property type="entry name" value="RND_permease_2"/>
    <property type="match status" value="1"/>
</dbReference>
<dbReference type="PANTHER" id="PTHR32063">
    <property type="match status" value="1"/>
</dbReference>
<dbReference type="PANTHER" id="PTHR32063:SF34">
    <property type="entry name" value="MULTIDRUG RESISTANCE PROTEIN MDTC"/>
    <property type="match status" value="1"/>
</dbReference>
<dbReference type="Pfam" id="PF00873">
    <property type="entry name" value="ACR_tran"/>
    <property type="match status" value="1"/>
</dbReference>
<dbReference type="PRINTS" id="PR00702">
    <property type="entry name" value="ACRIFLAVINRP"/>
</dbReference>
<dbReference type="SUPFAM" id="SSF82693">
    <property type="entry name" value="Multidrug efflux transporter AcrB pore domain, PN1, PN2, PC1 and PC2 subdomains"/>
    <property type="match status" value="4"/>
</dbReference>
<dbReference type="SUPFAM" id="SSF82714">
    <property type="entry name" value="Multidrug efflux transporter AcrB TolC docking domain, DN and DC subdomains"/>
    <property type="match status" value="2"/>
</dbReference>
<dbReference type="SUPFAM" id="SSF82866">
    <property type="entry name" value="Multidrug efflux transporter AcrB transmembrane domain"/>
    <property type="match status" value="2"/>
</dbReference>
<comment type="subunit">
    <text evidence="1">Part of a tripartite efflux system composed of MdtA, MdtB and MdtC. MdtC forms a heteromultimer with MdtB.</text>
</comment>
<comment type="subcellular location">
    <subcellularLocation>
        <location evidence="1">Cell inner membrane</location>
        <topology evidence="1">Multi-pass membrane protein</topology>
    </subcellularLocation>
</comment>
<comment type="similarity">
    <text evidence="1">Belongs to the resistance-nodulation-cell division (RND) (TC 2.A.6) family. MdtC subfamily.</text>
</comment>
<gene>
    <name evidence="1" type="primary">mdtC</name>
    <name type="ordered locus">SeAg_B2258</name>
</gene>